<feature type="signal peptide" evidence="1">
    <location>
        <begin position="1"/>
        <end position="20"/>
    </location>
</feature>
<feature type="chain" id="PRO_0000450957" description="Conotoxin Cal14.14" evidence="1">
    <location>
        <begin position="21"/>
        <end position="55"/>
    </location>
</feature>
<feature type="disulfide bond" evidence="3">
    <location>
        <begin position="34"/>
        <end position="48"/>
    </location>
</feature>
<feature type="disulfide bond" evidence="3">
    <location>
        <begin position="38"/>
        <end position="52"/>
    </location>
</feature>
<keyword id="KW-1015">Disulfide bond</keyword>
<keyword id="KW-0528">Neurotoxin</keyword>
<keyword id="KW-0964">Secreted</keyword>
<keyword id="KW-0732">Signal</keyword>
<keyword id="KW-0800">Toxin</keyword>
<name>CUEE_CONCL</name>
<sequence length="55" mass="6256">MFRLGVFLLTFLLLVSMATSEYSRGRIMARASECVNECVESGHNTFHCERHCSNT</sequence>
<protein>
    <recommendedName>
        <fullName evidence="3">Conotoxin Cal14.14</fullName>
    </recommendedName>
    <alternativeName>
        <fullName evidence="2">O3_cal14d</fullName>
    </alternativeName>
</protein>
<evidence type="ECO:0000255" key="1"/>
<evidence type="ECO:0000303" key="2">
    <source>
    </source>
</evidence>
<evidence type="ECO:0000305" key="3"/>
<evidence type="ECO:0000305" key="4">
    <source>
    </source>
</evidence>
<dbReference type="GO" id="GO:0005576">
    <property type="term" value="C:extracellular region"/>
    <property type="evidence" value="ECO:0007669"/>
    <property type="project" value="UniProtKB-SubCell"/>
</dbReference>
<dbReference type="GO" id="GO:0090729">
    <property type="term" value="F:toxin activity"/>
    <property type="evidence" value="ECO:0007669"/>
    <property type="project" value="UniProtKB-KW"/>
</dbReference>
<proteinExistence type="inferred from homology"/>
<organism>
    <name type="scientific">Californiconus californicus</name>
    <name type="common">California cone</name>
    <name type="synonym">Conus californicus</name>
    <dbReference type="NCBI Taxonomy" id="1736779"/>
    <lineage>
        <taxon>Eukaryota</taxon>
        <taxon>Metazoa</taxon>
        <taxon>Spiralia</taxon>
        <taxon>Lophotrochozoa</taxon>
        <taxon>Mollusca</taxon>
        <taxon>Gastropoda</taxon>
        <taxon>Caenogastropoda</taxon>
        <taxon>Neogastropoda</taxon>
        <taxon>Conoidea</taxon>
        <taxon>Conidae</taxon>
        <taxon>Californiconus</taxon>
    </lineage>
</organism>
<reference key="1">
    <citation type="journal article" date="2019" name="Toxins">
        <title>The diversified O-superfamily in Californiconus californicus presents a conotoxin with antimycobacterial activity.</title>
        <authorList>
            <person name="Bernaldez-Sarabia J."/>
            <person name="Figueroa-Montiel A."/>
            <person name="Duenas S."/>
            <person name="Cervantes-Luevano K."/>
            <person name="Beltran J.A."/>
            <person name="Ortiz E."/>
            <person name="Jimenez S."/>
            <person name="Possani L.D."/>
            <person name="Paniagua-Solis J.F."/>
            <person name="Gonzalez-Canudas J."/>
            <person name="Licea-Navarro A."/>
        </authorList>
    </citation>
    <scope>NUCLEOTIDE SEQUENCE [MRNA]</scope>
    <source>
        <tissue>Venom duct</tissue>
    </source>
</reference>
<comment type="function">
    <text evidence="3">Probable neurotoxin.</text>
</comment>
<comment type="subcellular location">
    <subcellularLocation>
        <location evidence="4">Secreted</location>
    </subcellularLocation>
</comment>
<comment type="tissue specificity">
    <text evidence="4">Expressed by the venom duct.</text>
</comment>
<comment type="domain">
    <text evidence="3">The cysteine framework is XIV (C-C-C-C).</text>
</comment>
<accession>P0DTX5</accession>